<proteinExistence type="inferred from homology"/>
<sequence>MENKKTIYFLCTGNSCRSQMAEAWGKQFLEDKWNVYSAGIEAHGVNPNAIKAMNEVNIDITNQTSDIIDATILNSADLVVTLCSHADAVCPSTPPHVNRVHWGFDDPAGKEWSEFQRVRDEIGEHIKRFSETGE</sequence>
<dbReference type="EC" id="1.20.4.4" evidence="1"/>
<dbReference type="EMBL" id="CP001186">
    <property type="protein sequence ID" value="ACK97207.1"/>
    <property type="molecule type" value="Genomic_DNA"/>
</dbReference>
<dbReference type="RefSeq" id="WP_000428339.1">
    <property type="nucleotide sequence ID" value="NC_011772.1"/>
</dbReference>
<dbReference type="SMR" id="B7INE4"/>
<dbReference type="KEGG" id="bcg:BCG9842_B2062"/>
<dbReference type="HOGENOM" id="CLU_071415_3_2_9"/>
<dbReference type="Proteomes" id="UP000006744">
    <property type="component" value="Chromosome"/>
</dbReference>
<dbReference type="GO" id="GO:0005737">
    <property type="term" value="C:cytoplasm"/>
    <property type="evidence" value="ECO:0007669"/>
    <property type="project" value="UniProtKB-SubCell"/>
</dbReference>
<dbReference type="GO" id="GO:0030612">
    <property type="term" value="F:arsenate reductase (thioredoxin) activity"/>
    <property type="evidence" value="ECO:0007669"/>
    <property type="project" value="UniProtKB-UniRule"/>
</dbReference>
<dbReference type="GO" id="GO:0004725">
    <property type="term" value="F:protein tyrosine phosphatase activity"/>
    <property type="evidence" value="ECO:0007669"/>
    <property type="project" value="InterPro"/>
</dbReference>
<dbReference type="GO" id="GO:0046685">
    <property type="term" value="P:response to arsenic-containing substance"/>
    <property type="evidence" value="ECO:0007669"/>
    <property type="project" value="UniProtKB-KW"/>
</dbReference>
<dbReference type="CDD" id="cd16345">
    <property type="entry name" value="LMWP_ArsC"/>
    <property type="match status" value="1"/>
</dbReference>
<dbReference type="FunFam" id="3.40.50.2300:FF:000237">
    <property type="entry name" value="Arsenate reductase"/>
    <property type="match status" value="1"/>
</dbReference>
<dbReference type="Gene3D" id="3.40.50.2300">
    <property type="match status" value="1"/>
</dbReference>
<dbReference type="HAMAP" id="MF_01624">
    <property type="entry name" value="Arsenate_reduct"/>
    <property type="match status" value="1"/>
</dbReference>
<dbReference type="InterPro" id="IPR014064">
    <property type="entry name" value="Arsenate_reductase_ArsC"/>
</dbReference>
<dbReference type="InterPro" id="IPR023485">
    <property type="entry name" value="Ptyr_pPase"/>
</dbReference>
<dbReference type="InterPro" id="IPR036196">
    <property type="entry name" value="Ptyr_pPase_sf"/>
</dbReference>
<dbReference type="NCBIfam" id="TIGR02691">
    <property type="entry name" value="arsC_pI258_fam"/>
    <property type="match status" value="1"/>
</dbReference>
<dbReference type="NCBIfam" id="NF010053">
    <property type="entry name" value="PRK13530.1"/>
    <property type="match status" value="1"/>
</dbReference>
<dbReference type="PANTHER" id="PTHR43428">
    <property type="entry name" value="ARSENATE REDUCTASE"/>
    <property type="match status" value="1"/>
</dbReference>
<dbReference type="PANTHER" id="PTHR43428:SF1">
    <property type="entry name" value="ARSENATE REDUCTASE"/>
    <property type="match status" value="1"/>
</dbReference>
<dbReference type="Pfam" id="PF01451">
    <property type="entry name" value="LMWPc"/>
    <property type="match status" value="1"/>
</dbReference>
<dbReference type="SMART" id="SM00226">
    <property type="entry name" value="LMWPc"/>
    <property type="match status" value="1"/>
</dbReference>
<dbReference type="SUPFAM" id="SSF52788">
    <property type="entry name" value="Phosphotyrosine protein phosphatases I"/>
    <property type="match status" value="1"/>
</dbReference>
<accession>B7INE4</accession>
<organism>
    <name type="scientific">Bacillus cereus (strain G9842)</name>
    <dbReference type="NCBI Taxonomy" id="405531"/>
    <lineage>
        <taxon>Bacteria</taxon>
        <taxon>Bacillati</taxon>
        <taxon>Bacillota</taxon>
        <taxon>Bacilli</taxon>
        <taxon>Bacillales</taxon>
        <taxon>Bacillaceae</taxon>
        <taxon>Bacillus</taxon>
        <taxon>Bacillus cereus group</taxon>
    </lineage>
</organism>
<name>ARSC_BACC2</name>
<comment type="function">
    <text evidence="1">Catalyzes the reduction of arsenate [As(V)] to arsenite [As(III)].</text>
</comment>
<comment type="catalytic activity">
    <reaction evidence="1">
        <text>arsenate + [thioredoxin]-dithiol + H(+) = arsenite + [thioredoxin]-disulfide + H2O</text>
        <dbReference type="Rhea" id="RHEA:43848"/>
        <dbReference type="Rhea" id="RHEA-COMP:10698"/>
        <dbReference type="Rhea" id="RHEA-COMP:10700"/>
        <dbReference type="ChEBI" id="CHEBI:15377"/>
        <dbReference type="ChEBI" id="CHEBI:15378"/>
        <dbReference type="ChEBI" id="CHEBI:29242"/>
        <dbReference type="ChEBI" id="CHEBI:29950"/>
        <dbReference type="ChEBI" id="CHEBI:48597"/>
        <dbReference type="ChEBI" id="CHEBI:50058"/>
        <dbReference type="EC" id="1.20.4.4"/>
    </reaction>
</comment>
<comment type="subcellular location">
    <subcellularLocation>
        <location evidence="1">Cytoplasm</location>
    </subcellularLocation>
</comment>
<comment type="similarity">
    <text evidence="1">Belongs to the low molecular weight phosphotyrosine protein phosphatase family. Thioredoxin-coupled ArsC subfamily.</text>
</comment>
<protein>
    <recommendedName>
        <fullName evidence="1">Arsenate reductase</fullName>
        <ecNumber evidence="1">1.20.4.4</ecNumber>
    </recommendedName>
</protein>
<keyword id="KW-0059">Arsenical resistance</keyword>
<keyword id="KW-0963">Cytoplasm</keyword>
<keyword id="KW-1015">Disulfide bond</keyword>
<keyword id="KW-0560">Oxidoreductase</keyword>
<keyword id="KW-0676">Redox-active center</keyword>
<gene>
    <name evidence="1" type="primary">arsC</name>
    <name type="ordered locus">BCG9842_B2062</name>
</gene>
<evidence type="ECO:0000255" key="1">
    <source>
        <dbReference type="HAMAP-Rule" id="MF_01624"/>
    </source>
</evidence>
<reference key="1">
    <citation type="submission" date="2008-10" db="EMBL/GenBank/DDBJ databases">
        <title>Genome sequence of Bacillus cereus G9842.</title>
        <authorList>
            <person name="Dodson R.J."/>
            <person name="Durkin A.S."/>
            <person name="Rosovitz M.J."/>
            <person name="Rasko D.A."/>
            <person name="Hoffmaster A."/>
            <person name="Ravel J."/>
            <person name="Sutton G."/>
        </authorList>
    </citation>
    <scope>NUCLEOTIDE SEQUENCE [LARGE SCALE GENOMIC DNA]</scope>
    <source>
        <strain>G9842</strain>
    </source>
</reference>
<feature type="chain" id="PRO_1000186115" description="Arsenate reductase">
    <location>
        <begin position="1"/>
        <end position="134"/>
    </location>
</feature>
<feature type="active site" description="Nucleophile" evidence="1">
    <location>
        <position position="11"/>
    </location>
</feature>
<feature type="active site" description="Nucleophile" evidence="1">
    <location>
        <position position="83"/>
    </location>
</feature>
<feature type="active site" description="Nucleophile" evidence="1">
    <location>
        <position position="90"/>
    </location>
</feature>
<feature type="disulfide bond" description="Redox-active; alternate" evidence="1">
    <location>
        <begin position="11"/>
        <end position="83"/>
    </location>
</feature>
<feature type="disulfide bond" description="Redox-active; alternate" evidence="1">
    <location>
        <begin position="83"/>
        <end position="90"/>
    </location>
</feature>